<name>IHFA_COXBN</name>
<reference key="1">
    <citation type="journal article" date="2009" name="Infect. Immun.">
        <title>Comparative genomics reveal extensive transposon-mediated genomic plasticity and diversity among potential effector proteins within the genus Coxiella.</title>
        <authorList>
            <person name="Beare P.A."/>
            <person name="Unsworth N."/>
            <person name="Andoh M."/>
            <person name="Voth D.E."/>
            <person name="Omsland A."/>
            <person name="Gilk S.D."/>
            <person name="Williams K.P."/>
            <person name="Sobral B.W."/>
            <person name="Kupko J.J. III"/>
            <person name="Porcella S.F."/>
            <person name="Samuel J.E."/>
            <person name="Heinzen R.A."/>
        </authorList>
    </citation>
    <scope>NUCLEOTIDE SEQUENCE [LARGE SCALE GENOMIC DNA]</scope>
    <source>
        <strain>Dugway 5J108-111</strain>
    </source>
</reference>
<organism>
    <name type="scientific">Coxiella burnetii (strain Dugway 5J108-111)</name>
    <dbReference type="NCBI Taxonomy" id="434922"/>
    <lineage>
        <taxon>Bacteria</taxon>
        <taxon>Pseudomonadati</taxon>
        <taxon>Pseudomonadota</taxon>
        <taxon>Gammaproteobacteria</taxon>
        <taxon>Legionellales</taxon>
        <taxon>Coxiellaceae</taxon>
        <taxon>Coxiella</taxon>
    </lineage>
</organism>
<comment type="function">
    <text evidence="1">This protein is one of the two subunits of integration host factor, a specific DNA-binding protein that functions in genetic recombination as well as in transcriptional and translational control.</text>
</comment>
<comment type="subunit">
    <text evidence="1">Heterodimer of an alpha and a beta chain.</text>
</comment>
<comment type="similarity">
    <text evidence="1">Belongs to the bacterial histone-like protein family.</text>
</comment>
<accession>A9KGB5</accession>
<evidence type="ECO:0000255" key="1">
    <source>
        <dbReference type="HAMAP-Rule" id="MF_00380"/>
    </source>
</evidence>
<evidence type="ECO:0000256" key="2">
    <source>
        <dbReference type="SAM" id="MobiDB-lite"/>
    </source>
</evidence>
<sequence>MALTKADLSEHLFNVVGLNKREAKDLVELFFKEISLSLERGEPVKLSGFGNFNLRDKGERPGRNPKTGEEIPITARRVVTFRAGHKLKSRVEKNVKPKEEGES</sequence>
<keyword id="KW-0233">DNA recombination</keyword>
<keyword id="KW-0238">DNA-binding</keyword>
<keyword id="KW-0804">Transcription</keyword>
<keyword id="KW-0805">Transcription regulation</keyword>
<keyword id="KW-0810">Translation regulation</keyword>
<gene>
    <name evidence="1" type="primary">ihfA</name>
    <name evidence="1" type="synonym">himA</name>
    <name type="ordered locus">CBUD_1409</name>
</gene>
<feature type="chain" id="PRO_1000080027" description="Integration host factor subunit alpha">
    <location>
        <begin position="1"/>
        <end position="103"/>
    </location>
</feature>
<feature type="region of interest" description="Disordered" evidence="2">
    <location>
        <begin position="50"/>
        <end position="72"/>
    </location>
</feature>
<feature type="compositionally biased region" description="Basic and acidic residues" evidence="2">
    <location>
        <begin position="54"/>
        <end position="69"/>
    </location>
</feature>
<proteinExistence type="inferred from homology"/>
<protein>
    <recommendedName>
        <fullName evidence="1">Integration host factor subunit alpha</fullName>
        <shortName evidence="1">IHF-alpha</shortName>
    </recommendedName>
</protein>
<dbReference type="EMBL" id="CP000733">
    <property type="protein sequence ID" value="ABS77619.1"/>
    <property type="molecule type" value="Genomic_DNA"/>
</dbReference>
<dbReference type="RefSeq" id="WP_005770927.1">
    <property type="nucleotide sequence ID" value="NC_009727.1"/>
</dbReference>
<dbReference type="SMR" id="A9KGB5"/>
<dbReference type="KEGG" id="cbd:CBUD_1409"/>
<dbReference type="HOGENOM" id="CLU_105066_1_3_6"/>
<dbReference type="Proteomes" id="UP000008555">
    <property type="component" value="Chromosome"/>
</dbReference>
<dbReference type="GO" id="GO:0005829">
    <property type="term" value="C:cytosol"/>
    <property type="evidence" value="ECO:0007669"/>
    <property type="project" value="TreeGrafter"/>
</dbReference>
<dbReference type="GO" id="GO:0003677">
    <property type="term" value="F:DNA binding"/>
    <property type="evidence" value="ECO:0007669"/>
    <property type="project" value="UniProtKB-UniRule"/>
</dbReference>
<dbReference type="GO" id="GO:0030527">
    <property type="term" value="F:structural constituent of chromatin"/>
    <property type="evidence" value="ECO:0007669"/>
    <property type="project" value="InterPro"/>
</dbReference>
<dbReference type="GO" id="GO:0006310">
    <property type="term" value="P:DNA recombination"/>
    <property type="evidence" value="ECO:0007669"/>
    <property type="project" value="UniProtKB-UniRule"/>
</dbReference>
<dbReference type="GO" id="GO:0009893">
    <property type="term" value="P:positive regulation of metabolic process"/>
    <property type="evidence" value="ECO:0007669"/>
    <property type="project" value="UniProtKB-ARBA"/>
</dbReference>
<dbReference type="GO" id="GO:0006355">
    <property type="term" value="P:regulation of DNA-templated transcription"/>
    <property type="evidence" value="ECO:0007669"/>
    <property type="project" value="UniProtKB-UniRule"/>
</dbReference>
<dbReference type="GO" id="GO:0006417">
    <property type="term" value="P:regulation of translation"/>
    <property type="evidence" value="ECO:0007669"/>
    <property type="project" value="UniProtKB-UniRule"/>
</dbReference>
<dbReference type="CDD" id="cd13835">
    <property type="entry name" value="IHF_A"/>
    <property type="match status" value="1"/>
</dbReference>
<dbReference type="FunFam" id="4.10.520.10:FF:000002">
    <property type="entry name" value="Integration host factor subunit alpha"/>
    <property type="match status" value="1"/>
</dbReference>
<dbReference type="Gene3D" id="4.10.520.10">
    <property type="entry name" value="IHF-like DNA-binding proteins"/>
    <property type="match status" value="1"/>
</dbReference>
<dbReference type="HAMAP" id="MF_00380">
    <property type="entry name" value="IHF_alpha"/>
    <property type="match status" value="1"/>
</dbReference>
<dbReference type="InterPro" id="IPR000119">
    <property type="entry name" value="Hist_DNA-bd"/>
</dbReference>
<dbReference type="InterPro" id="IPR020816">
    <property type="entry name" value="Histone-like_DNA-bd_CS"/>
</dbReference>
<dbReference type="InterPro" id="IPR010992">
    <property type="entry name" value="IHF-like_DNA-bd_dom_sf"/>
</dbReference>
<dbReference type="InterPro" id="IPR005684">
    <property type="entry name" value="IHF_alpha"/>
</dbReference>
<dbReference type="NCBIfam" id="TIGR00987">
    <property type="entry name" value="himA"/>
    <property type="match status" value="1"/>
</dbReference>
<dbReference type="NCBIfam" id="NF001401">
    <property type="entry name" value="PRK00285.1"/>
    <property type="match status" value="1"/>
</dbReference>
<dbReference type="PANTHER" id="PTHR33175">
    <property type="entry name" value="DNA-BINDING PROTEIN HU"/>
    <property type="match status" value="1"/>
</dbReference>
<dbReference type="PANTHER" id="PTHR33175:SF2">
    <property type="entry name" value="INTEGRATION HOST FACTOR SUBUNIT ALPHA"/>
    <property type="match status" value="1"/>
</dbReference>
<dbReference type="Pfam" id="PF00216">
    <property type="entry name" value="Bac_DNA_binding"/>
    <property type="match status" value="1"/>
</dbReference>
<dbReference type="PRINTS" id="PR01727">
    <property type="entry name" value="DNABINDINGHU"/>
</dbReference>
<dbReference type="SMART" id="SM00411">
    <property type="entry name" value="BHL"/>
    <property type="match status" value="1"/>
</dbReference>
<dbReference type="SUPFAM" id="SSF47729">
    <property type="entry name" value="IHF-like DNA-binding proteins"/>
    <property type="match status" value="1"/>
</dbReference>
<dbReference type="PROSITE" id="PS00045">
    <property type="entry name" value="HISTONE_LIKE"/>
    <property type="match status" value="1"/>
</dbReference>